<accession>C4V819</accession>
<name>SYQ_VAIC1</name>
<reference key="1">
    <citation type="journal article" date="2009" name="PLoS Pathog.">
        <title>Genomic analyses of the microsporidian Nosema ceranae, an emergent pathogen of honey bees.</title>
        <authorList>
            <person name="Cornman R.S."/>
            <person name="Chen Y.P."/>
            <person name="Schatz M.C."/>
            <person name="Street C."/>
            <person name="Zhao Y."/>
            <person name="Desany B."/>
            <person name="Egholm M."/>
            <person name="Hutchison S."/>
            <person name="Pettis J.S."/>
            <person name="Lipkin W.I."/>
            <person name="Evans J.D."/>
        </authorList>
    </citation>
    <scope>NUCLEOTIDE SEQUENCE [LARGE SCALE GENOMIC DNA]</scope>
    <source>
        <strain>BRL01</strain>
    </source>
</reference>
<organism>
    <name type="scientific">Vairimorpha ceranae (strain BRL01)</name>
    <name type="common">Microsporidian parasite</name>
    <name type="synonym">Nosema ceranae</name>
    <dbReference type="NCBI Taxonomy" id="578460"/>
    <lineage>
        <taxon>Eukaryota</taxon>
        <taxon>Fungi</taxon>
        <taxon>Fungi incertae sedis</taxon>
        <taxon>Microsporidia</taxon>
        <taxon>Nosematidae</taxon>
        <taxon>Vairimorpha</taxon>
    </lineage>
</organism>
<proteinExistence type="inferred from homology"/>
<gene>
    <name type="ORF">NCER_100619</name>
</gene>
<sequence>MFDVESLLKKLNVSEDKKENILQKEQLKKNLETLYTNFDTDNKLLFTLACTAPKKIDILIFGILINENVIKNDATLRASMKFAIKNTDVTYEELKDFILKNTKSKEEVSEIINKACLSGKSKKEVYIILKNKLPFEDSKYLMDEVNKFEIDTSKSKKVKDWLEEGEVSMLHKPGDNPQLNEKILKDHLERTGGKVVTRFPPEPNGILHIGHAKAINLDFGYAEKYNGICYLRFDDTNPRNEEDYYFESIIEDVKWLGFEPYAITSSSKYFGDMCELAEKLILKDKAYICELSNEELKKRRRMLSEAFETDKDKSIEELGLILSPYRNREISENLKIFREMVEKKHKEGDYTLRFKMDIRSKNPMMFDLVGMRIIDCDHVVTKDKYNLYPSYEFALCVSDSLEDVTHSFCTREFFTRQESYKWLLDALEIYKPVQWEFSRLNISNTVLSKRKIVPLKKYGIELDDPRLYTIKGMRRRGIPPQAINNFVKSLGITYAETIIDNKKFESFIRDELNKTTQRVMCVMDPLKIYIRNAKEQEISIPNSNQKIIFKPYIYIEKSDFKMEDDDKDFLRFTPNQSVGLYMFGAIKFIKFDNDMIIAELTNETPKKFIHWVSCDSIKVTIRLYDPLFRSFNPEEGNYLDNINLDSLKTVVGYCDDRIKGCEVEDKFQFQRVGYFCVDPDTTPENIVFNRIITLI</sequence>
<protein>
    <recommendedName>
        <fullName>Probable glutamine--tRNA ligase</fullName>
        <ecNumber evidence="3">6.1.1.18</ecNumber>
    </recommendedName>
    <alternativeName>
        <fullName>Glutaminyl-tRNA synthetase</fullName>
        <shortName>GlnRS</shortName>
    </alternativeName>
</protein>
<comment type="catalytic activity">
    <reaction evidence="3">
        <text>tRNA(Gln) + L-glutamine + ATP = L-glutaminyl-tRNA(Gln) + AMP + diphosphate</text>
        <dbReference type="Rhea" id="RHEA:20121"/>
        <dbReference type="Rhea" id="RHEA-COMP:9662"/>
        <dbReference type="Rhea" id="RHEA-COMP:9681"/>
        <dbReference type="ChEBI" id="CHEBI:30616"/>
        <dbReference type="ChEBI" id="CHEBI:33019"/>
        <dbReference type="ChEBI" id="CHEBI:58359"/>
        <dbReference type="ChEBI" id="CHEBI:78442"/>
        <dbReference type="ChEBI" id="CHEBI:78521"/>
        <dbReference type="ChEBI" id="CHEBI:456215"/>
        <dbReference type="EC" id="6.1.1.18"/>
    </reaction>
</comment>
<comment type="similarity">
    <text evidence="4">Belongs to the class-I aminoacyl-tRNA synthetase family.</text>
</comment>
<dbReference type="EC" id="6.1.1.18" evidence="3"/>
<dbReference type="EMBL" id="ACOL01000036">
    <property type="protein sequence ID" value="EEQ82641.1"/>
    <property type="molecule type" value="Genomic_DNA"/>
</dbReference>
<dbReference type="RefSeq" id="XP_002996312.1">
    <property type="nucleotide sequence ID" value="XM_002996266.1"/>
</dbReference>
<dbReference type="SMR" id="C4V819"/>
<dbReference type="FunCoup" id="C4V819">
    <property type="interactions" value="294"/>
</dbReference>
<dbReference type="STRING" id="578460.C4V819"/>
<dbReference type="KEGG" id="nce:NCER_100619"/>
<dbReference type="VEuPathDB" id="MicrosporidiaDB:NCER_100619"/>
<dbReference type="HOGENOM" id="CLU_001882_2_3_1"/>
<dbReference type="InParanoid" id="C4V819"/>
<dbReference type="OMA" id="FAWRIMG"/>
<dbReference type="OrthoDB" id="7619at6029"/>
<dbReference type="Proteomes" id="UP000009082">
    <property type="component" value="Unassembled WGS sequence"/>
</dbReference>
<dbReference type="GO" id="GO:0005829">
    <property type="term" value="C:cytosol"/>
    <property type="evidence" value="ECO:0007669"/>
    <property type="project" value="TreeGrafter"/>
</dbReference>
<dbReference type="GO" id="GO:0005524">
    <property type="term" value="F:ATP binding"/>
    <property type="evidence" value="ECO:0007669"/>
    <property type="project" value="UniProtKB-KW"/>
</dbReference>
<dbReference type="GO" id="GO:0004819">
    <property type="term" value="F:glutamine-tRNA ligase activity"/>
    <property type="evidence" value="ECO:0007669"/>
    <property type="project" value="UniProtKB-EC"/>
</dbReference>
<dbReference type="GO" id="GO:0006425">
    <property type="term" value="P:glutaminyl-tRNA aminoacylation"/>
    <property type="evidence" value="ECO:0007669"/>
    <property type="project" value="InterPro"/>
</dbReference>
<dbReference type="FunFam" id="3.40.50.620:FF:000037">
    <property type="entry name" value="Glutamine--tRNA ligase cytoplasmic"/>
    <property type="match status" value="1"/>
</dbReference>
<dbReference type="Gene3D" id="3.40.50.620">
    <property type="entry name" value="HUPs"/>
    <property type="match status" value="1"/>
</dbReference>
<dbReference type="Gene3D" id="2.40.240.10">
    <property type="entry name" value="Ribosomal Protein L25, Chain P"/>
    <property type="match status" value="2"/>
</dbReference>
<dbReference type="InterPro" id="IPR001412">
    <property type="entry name" value="aa-tRNA-synth_I_CS"/>
</dbReference>
<dbReference type="InterPro" id="IPR004514">
    <property type="entry name" value="Gln-tRNA-synth"/>
</dbReference>
<dbReference type="InterPro" id="IPR050132">
    <property type="entry name" value="Gln/Glu-tRNA_Ligase"/>
</dbReference>
<dbReference type="InterPro" id="IPR000924">
    <property type="entry name" value="Glu/Gln-tRNA-synth"/>
</dbReference>
<dbReference type="InterPro" id="IPR020058">
    <property type="entry name" value="Glu/Gln-tRNA-synth_Ib_cat-dom"/>
</dbReference>
<dbReference type="InterPro" id="IPR020059">
    <property type="entry name" value="Glu/Gln-tRNA-synth_Ib_codon-bd"/>
</dbReference>
<dbReference type="InterPro" id="IPR020056">
    <property type="entry name" value="Rbsml_bL25/Gln-tRNA_synth_N"/>
</dbReference>
<dbReference type="InterPro" id="IPR011035">
    <property type="entry name" value="Ribosomal_bL25/Gln-tRNA_synth"/>
</dbReference>
<dbReference type="InterPro" id="IPR014729">
    <property type="entry name" value="Rossmann-like_a/b/a_fold"/>
</dbReference>
<dbReference type="InterPro" id="IPR049437">
    <property type="entry name" value="tRNA-synt_1c_C2"/>
</dbReference>
<dbReference type="NCBIfam" id="TIGR00440">
    <property type="entry name" value="glnS"/>
    <property type="match status" value="1"/>
</dbReference>
<dbReference type="PANTHER" id="PTHR43097:SF4">
    <property type="entry name" value="GLUTAMINE--TRNA LIGASE"/>
    <property type="match status" value="1"/>
</dbReference>
<dbReference type="PANTHER" id="PTHR43097">
    <property type="entry name" value="GLUTAMINE-TRNA LIGASE"/>
    <property type="match status" value="1"/>
</dbReference>
<dbReference type="Pfam" id="PF00749">
    <property type="entry name" value="tRNA-synt_1c"/>
    <property type="match status" value="1"/>
</dbReference>
<dbReference type="Pfam" id="PF03950">
    <property type="entry name" value="tRNA-synt_1c_C"/>
    <property type="match status" value="1"/>
</dbReference>
<dbReference type="Pfam" id="PF20974">
    <property type="entry name" value="tRNA-synt_1c_C2"/>
    <property type="match status" value="1"/>
</dbReference>
<dbReference type="PRINTS" id="PR00987">
    <property type="entry name" value="TRNASYNTHGLU"/>
</dbReference>
<dbReference type="SUPFAM" id="SSF52374">
    <property type="entry name" value="Nucleotidylyl transferase"/>
    <property type="match status" value="1"/>
</dbReference>
<dbReference type="SUPFAM" id="SSF50715">
    <property type="entry name" value="Ribosomal protein L25-like"/>
    <property type="match status" value="1"/>
</dbReference>
<dbReference type="PROSITE" id="PS00178">
    <property type="entry name" value="AA_TRNA_LIGASE_I"/>
    <property type="match status" value="1"/>
</dbReference>
<feature type="chain" id="PRO_0000388383" description="Probable glutamine--tRNA ligase">
    <location>
        <begin position="1"/>
        <end position="695"/>
    </location>
</feature>
<feature type="short sequence motif" description="'HIGH' region" evidence="1">
    <location>
        <begin position="201"/>
        <end position="211"/>
    </location>
</feature>
<feature type="short sequence motif" description="'KMSKS' region" evidence="1">
    <location>
        <begin position="446"/>
        <end position="450"/>
    </location>
</feature>
<feature type="binding site" evidence="2">
    <location>
        <begin position="202"/>
        <end position="204"/>
    </location>
    <ligand>
        <name>ATP</name>
        <dbReference type="ChEBI" id="CHEBI:30616"/>
    </ligand>
</feature>
<feature type="binding site" evidence="2">
    <location>
        <begin position="208"/>
        <end position="214"/>
    </location>
    <ligand>
        <name>ATP</name>
        <dbReference type="ChEBI" id="CHEBI:30616"/>
    </ligand>
</feature>
<feature type="binding site" evidence="2">
    <location>
        <position position="234"/>
    </location>
    <ligand>
        <name>L-glutamine</name>
        <dbReference type="ChEBI" id="CHEBI:58359"/>
    </ligand>
</feature>
<feature type="binding site" evidence="2">
    <location>
        <position position="391"/>
    </location>
    <ligand>
        <name>L-glutamine</name>
        <dbReference type="ChEBI" id="CHEBI:58359"/>
    </ligand>
</feature>
<feature type="binding site" evidence="2">
    <location>
        <position position="410"/>
    </location>
    <ligand>
        <name>ATP</name>
        <dbReference type="ChEBI" id="CHEBI:30616"/>
    </ligand>
</feature>
<feature type="binding site" evidence="2">
    <location>
        <begin position="439"/>
        <end position="440"/>
    </location>
    <ligand>
        <name>ATP</name>
        <dbReference type="ChEBI" id="CHEBI:30616"/>
    </ligand>
</feature>
<feature type="binding site" evidence="2">
    <location>
        <begin position="447"/>
        <end position="449"/>
    </location>
    <ligand>
        <name>ATP</name>
        <dbReference type="ChEBI" id="CHEBI:30616"/>
    </ligand>
</feature>
<evidence type="ECO:0000250" key="1"/>
<evidence type="ECO:0000250" key="2">
    <source>
        <dbReference type="UniProtKB" id="P00962"/>
    </source>
</evidence>
<evidence type="ECO:0000250" key="3">
    <source>
        <dbReference type="UniProtKB" id="P47897"/>
    </source>
</evidence>
<evidence type="ECO:0000305" key="4"/>
<keyword id="KW-0030">Aminoacyl-tRNA synthetase</keyword>
<keyword id="KW-0067">ATP-binding</keyword>
<keyword id="KW-0436">Ligase</keyword>
<keyword id="KW-0547">Nucleotide-binding</keyword>
<keyword id="KW-0648">Protein biosynthesis</keyword>
<keyword id="KW-1185">Reference proteome</keyword>